<protein>
    <recommendedName>
        <fullName>G1/S-specific cyclin-E2</fullName>
    </recommendedName>
</protein>
<organism>
    <name type="scientific">Homo sapiens</name>
    <name type="common">Human</name>
    <dbReference type="NCBI Taxonomy" id="9606"/>
    <lineage>
        <taxon>Eukaryota</taxon>
        <taxon>Metazoa</taxon>
        <taxon>Chordata</taxon>
        <taxon>Craniata</taxon>
        <taxon>Vertebrata</taxon>
        <taxon>Euteleostomi</taxon>
        <taxon>Mammalia</taxon>
        <taxon>Eutheria</taxon>
        <taxon>Euarchontoglires</taxon>
        <taxon>Primates</taxon>
        <taxon>Haplorrhini</taxon>
        <taxon>Catarrhini</taxon>
        <taxon>Hominidae</taxon>
        <taxon>Homo</taxon>
    </lineage>
</organism>
<comment type="function">
    <text evidence="3 4 5">Essential for the control of the cell cycle at the late G1 and early S phase.</text>
</comment>
<comment type="subunit">
    <text evidence="4">Interacts with the CDK2 (in vivo) and CDK3 (in vitro) protein kinases to form a serine/threonine kinase holoenzyme complex. The cyclin subunit imparts substrate specificity to the complex.</text>
</comment>
<comment type="interaction">
    <interactant intactId="EBI-375033">
        <id>O96020</id>
    </interactant>
    <interactant intactId="EBI-375096">
        <id>P24941</id>
        <label>CDK2</label>
    </interactant>
    <organismsDiffer>false</organismsDiffer>
    <experiments>15</experiments>
</comment>
<comment type="interaction">
    <interactant intactId="EBI-375033">
        <id>O96020</id>
    </interactant>
    <interactant intactId="EBI-1245761">
        <id>Q00526</id>
        <label>CDK3</label>
    </interactant>
    <organismsDiffer>false</organismsDiffer>
    <experiments>4</experiments>
</comment>
<comment type="interaction">
    <interactant intactId="EBI-375033">
        <id>O96020</id>
    </interactant>
    <interactant intactId="EBI-375077">
        <id>P38936</id>
        <label>CDKN1A</label>
    </interactant>
    <organismsDiffer>false</organismsDiffer>
    <experiments>8</experiments>
</comment>
<comment type="interaction">
    <interactant intactId="EBI-375033">
        <id>O96020</id>
    </interactant>
    <interactant intactId="EBI-519280">
        <id>P46527</id>
        <label>CDKN1B</label>
    </interactant>
    <organismsDiffer>false</organismsDiffer>
    <experiments>6</experiments>
</comment>
<comment type="interaction">
    <interactant intactId="EBI-375033">
        <id>O96020</id>
    </interactant>
    <interactant intactId="EBI-466029">
        <id>P42858</id>
        <label>HTT</label>
    </interactant>
    <organismsDiffer>false</organismsDiffer>
    <experiments>6</experiments>
</comment>
<comment type="interaction">
    <interactant intactId="EBI-375033">
        <id>O96020</id>
    </interactant>
    <interactant intactId="EBI-720609">
        <id>O76024</id>
        <label>WFS1</label>
    </interactant>
    <organismsDiffer>false</organismsDiffer>
    <experiments>3</experiments>
</comment>
<comment type="subcellular location">
    <subcellularLocation>
        <location evidence="4">Nucleus</location>
    </subcellularLocation>
</comment>
<comment type="alternative products">
    <event type="alternative splicing"/>
    <isoform>
        <id>O96020-1</id>
        <name>Long</name>
        <sequence type="displayed"/>
    </isoform>
    <isoform>
        <id>O96020-2</id>
        <name>Short</name>
        <name>SV</name>
        <sequence type="described" ref="VSP_001256"/>
    </isoform>
</comment>
<comment type="tissue specificity">
    <text evidence="3 4 5">According to PubMed:9858585, highest levels of expression in adult testis, thymus and brain. Lower levels in placenta, spleen and colon. Consistently elevated levels in tumor-derived cells compared to non-transformed proliferating cells. According to PubMed:9840927: low levels in thymus, prostate, brain, skeletal muscle, and kidney. Elevated levels in lung. According to PubMed:9840943 highly expressed in testis, placenta, thymus and brain. In a lesser extent in small intestine and colon.</text>
</comment>
<comment type="induction">
    <text evidence="4">Activated by papilloma viral oncoproteins E6 and E7 which bind to and inactivate p53 and Rb, respectively.</text>
</comment>
<comment type="PTM">
    <text evidence="5">Phosphorylation by CDK2 triggers its release from CDK2 and degradation via the ubiquitin proteasome pathway.</text>
</comment>
<comment type="PTM">
    <text evidence="2">Lactylated at Lys-348 (PubMed:36896611). Delactylated by SIRT3 (PubMed:36896611).</text>
</comment>
<comment type="similarity">
    <text evidence="8">Belongs to the cyclin family. Cyclin E subfamily.</text>
</comment>
<reference key="1">
    <citation type="journal article" date="1999" name="Mol. Cell. Biol.">
        <title>Cyclin E2, a novel G1 cyclin that binds Cdk2 and is aberrantly expressed in human cancers.</title>
        <authorList>
            <person name="Gudas J.M."/>
            <person name="Payton M."/>
            <person name="Thukral S."/>
            <person name="Chen E."/>
            <person name="Bass M."/>
            <person name="Robinson M.O."/>
            <person name="Coats S."/>
        </authorList>
    </citation>
    <scope>NUCLEOTIDE SEQUENCE [MRNA] (ISOFORMS LONG AND SHORT)</scope>
    <scope>FUNCTION</scope>
    <scope>PHOSPHORYLATION</scope>
    <scope>TISSUE SPECIFICITY</scope>
    <source>
        <tissue>Fetal lung</tissue>
    </source>
</reference>
<reference key="2">
    <citation type="journal article" date="1998" name="Oncogene">
        <title>Cyclin E2: a novel CDK2 partner in the late G1 and S phases of the mammalian cell cycle.</title>
        <authorList>
            <person name="Lauper N."/>
            <person name="Beck A.R.P."/>
            <person name="Cariou S."/>
            <person name="Richman L."/>
            <person name="Hofmann K."/>
            <person name="Reith W."/>
            <person name="Slingerland J.M."/>
            <person name="Amati B."/>
        </authorList>
    </citation>
    <scope>NUCLEOTIDE SEQUENCE [MRNA]</scope>
    <scope>FUNCTION</scope>
    <scope>TISSUE SPECIFICITY</scope>
    <source>
        <tissue>B-cell</tissue>
    </source>
</reference>
<reference key="3">
    <citation type="journal article" date="1998" name="Oncogene">
        <title>Cyclin E2, a novel human G1 cyclin and activating partner of CDK2 and CDK3, is induced by viral oncoproteins.</title>
        <authorList>
            <person name="Zariwala M."/>
            <person name="Liu J."/>
            <person name="Xiong Y."/>
        </authorList>
    </citation>
    <scope>NUCLEOTIDE SEQUENCE [MRNA]</scope>
    <scope>FUNCTION</scope>
    <scope>SUBUNIT</scope>
    <scope>SUBCELLULAR LOCATION</scope>
    <scope>TISSUE SPECIFICITY</scope>
    <scope>INDUCTION</scope>
    <scope>MUTAGENESIS OF THR-392</scope>
    <source>
        <tissue>Keratinocyte</tissue>
    </source>
</reference>
<reference key="4">
    <citation type="submission" date="2004-12" db="EMBL/GenBank/DDBJ databases">
        <authorList>
            <consortium name="NIEHS SNPs program"/>
        </authorList>
    </citation>
    <scope>NUCLEOTIDE SEQUENCE [GENOMIC DNA]</scope>
    <scope>VARIANT SER-387</scope>
</reference>
<reference key="5">
    <citation type="journal article" date="2008" name="Mol. Cell">
        <title>Kinase-selective enrichment enables quantitative phosphoproteomics of the kinome across the cell cycle.</title>
        <authorList>
            <person name="Daub H."/>
            <person name="Olsen J.V."/>
            <person name="Bairlein M."/>
            <person name="Gnad F."/>
            <person name="Oppermann F.S."/>
            <person name="Korner R."/>
            <person name="Greff Z."/>
            <person name="Keri G."/>
            <person name="Stemmann O."/>
            <person name="Mann M."/>
        </authorList>
    </citation>
    <scope>PHOSPHORYLATION [LARGE SCALE ANALYSIS] AT SER-383 AND THR-392</scope>
    <scope>IDENTIFICATION BY MASS SPECTROMETRY [LARGE SCALE ANALYSIS]</scope>
    <source>
        <tissue>Cervix carcinoma</tissue>
    </source>
</reference>
<reference key="6">
    <citation type="journal article" date="2008" name="Proc. Natl. Acad. Sci. U.S.A.">
        <title>A quantitative atlas of mitotic phosphorylation.</title>
        <authorList>
            <person name="Dephoure N."/>
            <person name="Zhou C."/>
            <person name="Villen J."/>
            <person name="Beausoleil S.A."/>
            <person name="Bakalarski C.E."/>
            <person name="Elledge S.J."/>
            <person name="Gygi S.P."/>
        </authorList>
    </citation>
    <scope>PHOSPHORYLATION [LARGE SCALE ANALYSIS] AT SER-21</scope>
    <scope>IDENTIFICATION BY MASS SPECTROMETRY [LARGE SCALE ANALYSIS]</scope>
    <source>
        <tissue>Cervix carcinoma</tissue>
    </source>
</reference>
<reference key="7">
    <citation type="journal article" date="2009" name="Mol. Cell. Proteomics">
        <title>Large-scale proteomics analysis of the human kinome.</title>
        <authorList>
            <person name="Oppermann F.S."/>
            <person name="Gnad F."/>
            <person name="Olsen J.V."/>
            <person name="Hornberger R."/>
            <person name="Greff Z."/>
            <person name="Keri G."/>
            <person name="Mann M."/>
            <person name="Daub H."/>
        </authorList>
    </citation>
    <scope>IDENTIFICATION BY MASS SPECTROMETRY [LARGE SCALE ANALYSIS]</scope>
</reference>
<reference key="8">
    <citation type="journal article" date="2009" name="Sci. Signal.">
        <title>Quantitative phosphoproteomic analysis of T cell receptor signaling reveals system-wide modulation of protein-protein interactions.</title>
        <authorList>
            <person name="Mayya V."/>
            <person name="Lundgren D.H."/>
            <person name="Hwang S.-I."/>
            <person name="Rezaul K."/>
            <person name="Wu L."/>
            <person name="Eng J.K."/>
            <person name="Rodionov V."/>
            <person name="Han D.K."/>
        </authorList>
    </citation>
    <scope>PHOSPHORYLATION [LARGE SCALE ANALYSIS] AT SER-21</scope>
    <scope>IDENTIFICATION BY MASS SPECTROMETRY [LARGE SCALE ANALYSIS]</scope>
    <source>
        <tissue>Leukemic T-cell</tissue>
    </source>
</reference>
<reference key="9">
    <citation type="journal article" date="2013" name="J. Proteome Res.">
        <title>Toward a comprehensive characterization of a human cancer cell phosphoproteome.</title>
        <authorList>
            <person name="Zhou H."/>
            <person name="Di Palma S."/>
            <person name="Preisinger C."/>
            <person name="Peng M."/>
            <person name="Polat A.N."/>
            <person name="Heck A.J."/>
            <person name="Mohammed S."/>
        </authorList>
    </citation>
    <scope>PHOSPHORYLATION [LARGE SCALE ANALYSIS] AT SER-21</scope>
    <scope>IDENTIFICATION BY MASS SPECTROMETRY [LARGE SCALE ANALYSIS]</scope>
    <source>
        <tissue>Cervix carcinoma</tissue>
        <tissue>Erythroleukemia</tissue>
    </source>
</reference>
<reference evidence="9" key="10">
    <citation type="journal article" date="2023" name="EMBO Rep.">
        <title>SIRT3-dependent delactylation of cyclin E2 prevents hepatocellular carcinoma growth.</title>
        <authorList>
            <person name="Jin J."/>
            <person name="Bai L."/>
            <person name="Wang D."/>
            <person name="Ding W."/>
            <person name="Cao Z."/>
            <person name="Yan P."/>
            <person name="Li Y."/>
            <person name="Xi L."/>
            <person name="Wang Y."/>
            <person name="Zheng X."/>
            <person name="Wei H."/>
            <person name="Ding C."/>
            <person name="Wang Y."/>
        </authorList>
    </citation>
    <scope>X-RAY CRYSTALLOGRAPHY (3.70 ANGSTROMS) OF 339-351 IN COMPLEX WITH SIRT3</scope>
    <scope>LACTYLATION AT LYS-348</scope>
</reference>
<name>CCNE2_HUMAN</name>
<accession>O96020</accession>
<accession>O95439</accession>
<sequence>MSRRSSRLQAKQQPQPSQTESPQEAQIIQAKKRKTTQDVKKRREEVTKKHQYEIRNCWPPVLSGGISPCIIIETPHKEIGTSDFSRFTNYRFKNLFINPSPLPDLSWGCSKEVWLNMLKKESRYVHDKHFEVLHSDLEPQMRSILLDWLLEVCEVYTLHRETFYLAQDFFDRFMLTQKDINKNMLQLIGITSLFIASKLEEIYAPKLQEFAYVTDGACSEEDILRMELIILKALKWELCPVTIISWLNLFLQVDALKDAPKVLLPQYSQETFIQIAQLLDLCILAIDSLEFQYRILTAAALCHFTSIEVVKKASGLEWDSISECVDWMVPFVNVVKSTSPVKLKTFKKIPMEDRHNIQTHTNYLAMLEEVNYINTFRKGGQLSPVCNGGIMTPPKSTEKPPGKH</sequence>
<dbReference type="EMBL" id="AF106690">
    <property type="protein sequence ID" value="AAD08816.1"/>
    <property type="molecule type" value="mRNA"/>
</dbReference>
<dbReference type="EMBL" id="AF112857">
    <property type="protein sequence ID" value="AAD08819.1"/>
    <property type="molecule type" value="mRNA"/>
</dbReference>
<dbReference type="EMBL" id="AF091433">
    <property type="protein sequence ID" value="AAC80528.1"/>
    <property type="molecule type" value="mRNA"/>
</dbReference>
<dbReference type="EMBL" id="AF102778">
    <property type="protein sequence ID" value="AAC78145.1"/>
    <property type="molecule type" value="mRNA"/>
</dbReference>
<dbReference type="EMBL" id="AY850195">
    <property type="protein sequence ID" value="AAV97813.1"/>
    <property type="molecule type" value="Genomic_DNA"/>
</dbReference>
<dbReference type="CCDS" id="CCDS6264.1">
    <molecule id="O96020-1"/>
</dbReference>
<dbReference type="RefSeq" id="NP_477097.1">
    <molecule id="O96020-1"/>
    <property type="nucleotide sequence ID" value="NM_057749.3"/>
</dbReference>
<dbReference type="RefSeq" id="XP_016869446.1">
    <property type="nucleotide sequence ID" value="XM_017013957.1"/>
</dbReference>
<dbReference type="RefSeq" id="XP_016869447.1">
    <molecule id="O96020-1"/>
    <property type="nucleotide sequence ID" value="XM_017013958.2"/>
</dbReference>
<dbReference type="RefSeq" id="XP_016869448.1">
    <molecule id="O96020-1"/>
    <property type="nucleotide sequence ID" value="XM_017013959.2"/>
</dbReference>
<dbReference type="RefSeq" id="XP_047278367.1">
    <molecule id="O96020-1"/>
    <property type="nucleotide sequence ID" value="XM_047422411.1"/>
</dbReference>
<dbReference type="RefSeq" id="XP_054217464.1">
    <molecule id="O96020-1"/>
    <property type="nucleotide sequence ID" value="XM_054361489.1"/>
</dbReference>
<dbReference type="RefSeq" id="XP_054217465.1">
    <molecule id="O96020-1"/>
    <property type="nucleotide sequence ID" value="XM_054361490.1"/>
</dbReference>
<dbReference type="RefSeq" id="XP_054217466.1">
    <molecule id="O96020-1"/>
    <property type="nucleotide sequence ID" value="XM_054361491.1"/>
</dbReference>
<dbReference type="PDB" id="8HN9">
    <property type="method" value="X-ray"/>
    <property type="resolution" value="3.70 A"/>
    <property type="chains" value="C=339-351"/>
</dbReference>
<dbReference type="PDBsum" id="8HN9"/>
<dbReference type="SMR" id="O96020"/>
<dbReference type="BioGRID" id="114582">
    <property type="interactions" value="27"/>
</dbReference>
<dbReference type="ComplexPortal" id="CPX-2016">
    <property type="entry name" value="Cyclin E2-CDK2 complex"/>
</dbReference>
<dbReference type="DIP" id="DIP-31733N"/>
<dbReference type="FunCoup" id="O96020">
    <property type="interactions" value="2357"/>
</dbReference>
<dbReference type="IntAct" id="O96020">
    <property type="interactions" value="22"/>
</dbReference>
<dbReference type="MINT" id="O96020"/>
<dbReference type="STRING" id="9606.ENSP00000429089"/>
<dbReference type="BindingDB" id="O96020"/>
<dbReference type="ChEMBL" id="CHEMBL2094126"/>
<dbReference type="ChEMBL" id="CHEMBL4523633"/>
<dbReference type="ChEMBL" id="CHEMBL4523635"/>
<dbReference type="GlyGen" id="O96020">
    <property type="glycosylation" value="2 sites, 1 O-linked glycan (2 sites)"/>
</dbReference>
<dbReference type="iPTMnet" id="O96020"/>
<dbReference type="PhosphoSitePlus" id="O96020"/>
<dbReference type="BioMuta" id="CCNE2"/>
<dbReference type="CPTAC" id="CPTAC-2796"/>
<dbReference type="jPOST" id="O96020"/>
<dbReference type="MassIVE" id="O96020"/>
<dbReference type="PaxDb" id="9606-ENSP00000429089"/>
<dbReference type="PeptideAtlas" id="O96020"/>
<dbReference type="ProteomicsDB" id="51213">
    <molecule id="O96020-1"/>
</dbReference>
<dbReference type="ProteomicsDB" id="51214">
    <molecule id="O96020-2"/>
</dbReference>
<dbReference type="Pumba" id="O96020"/>
<dbReference type="Antibodypedia" id="3593">
    <property type="antibodies" value="374 antibodies from 39 providers"/>
</dbReference>
<dbReference type="DNASU" id="9134"/>
<dbReference type="Ensembl" id="ENST00000308108.9">
    <molecule id="O96020-1"/>
    <property type="protein sequence ID" value="ENSP00000309181.4"/>
    <property type="gene ID" value="ENSG00000175305.18"/>
</dbReference>
<dbReference type="Ensembl" id="ENST00000520509.5">
    <molecule id="O96020-1"/>
    <property type="protein sequence ID" value="ENSP00000429089.1"/>
    <property type="gene ID" value="ENSG00000175305.18"/>
</dbReference>
<dbReference type="GeneID" id="9134"/>
<dbReference type="KEGG" id="hsa:9134"/>
<dbReference type="MANE-Select" id="ENST00000308108.9">
    <property type="protein sequence ID" value="ENSP00000309181.4"/>
    <property type="RefSeq nucleotide sequence ID" value="NM_057749.3"/>
    <property type="RefSeq protein sequence ID" value="NP_477097.1"/>
</dbReference>
<dbReference type="UCSC" id="uc003yhc.4">
    <molecule id="O96020-1"/>
    <property type="organism name" value="human"/>
</dbReference>
<dbReference type="AGR" id="HGNC:1590"/>
<dbReference type="CTD" id="9134"/>
<dbReference type="DisGeNET" id="9134"/>
<dbReference type="GeneCards" id="CCNE2"/>
<dbReference type="HGNC" id="HGNC:1590">
    <property type="gene designation" value="CCNE2"/>
</dbReference>
<dbReference type="HPA" id="ENSG00000175305">
    <property type="expression patterns" value="Tissue enhanced (bone marrow, brain)"/>
</dbReference>
<dbReference type="MIM" id="603775">
    <property type="type" value="gene"/>
</dbReference>
<dbReference type="neXtProt" id="NX_O96020"/>
<dbReference type="OpenTargets" id="ENSG00000175305"/>
<dbReference type="PharmGKB" id="PA26155"/>
<dbReference type="VEuPathDB" id="HostDB:ENSG00000175305"/>
<dbReference type="eggNOG" id="KOG0655">
    <property type="taxonomic scope" value="Eukaryota"/>
</dbReference>
<dbReference type="GeneTree" id="ENSGT00940000156934"/>
<dbReference type="InParanoid" id="O96020"/>
<dbReference type="OMA" id="WPPTISG"/>
<dbReference type="OrthoDB" id="5590282at2759"/>
<dbReference type="PAN-GO" id="O96020">
    <property type="GO annotations" value="8 GO annotations based on evolutionary models"/>
</dbReference>
<dbReference type="PhylomeDB" id="O96020"/>
<dbReference type="TreeFam" id="TF101005"/>
<dbReference type="PathwayCommons" id="O96020"/>
<dbReference type="Reactome" id="R-HSA-1538133">
    <property type="pathway name" value="G0 and Early G1"/>
</dbReference>
<dbReference type="Reactome" id="R-HSA-187577">
    <property type="pathway name" value="SCF(Skp2)-mediated degradation of p27/p21"/>
</dbReference>
<dbReference type="Reactome" id="R-HSA-2559586">
    <property type="pathway name" value="DNA Damage/Telomere Stress Induced Senescence"/>
</dbReference>
<dbReference type="Reactome" id="R-HSA-390471">
    <property type="pathway name" value="Association of TriC/CCT with target proteins during biosynthesis"/>
</dbReference>
<dbReference type="Reactome" id="R-HSA-6804116">
    <property type="pathway name" value="TP53 Regulates Transcription of Genes Involved in G1 Cell Cycle Arrest"/>
</dbReference>
<dbReference type="Reactome" id="R-HSA-69017">
    <property type="pathway name" value="CDK-mediated phosphorylation and removal of Cdc6"/>
</dbReference>
<dbReference type="Reactome" id="R-HSA-69200">
    <property type="pathway name" value="Phosphorylation of proteins involved in G1/S transition by active Cyclin E:Cdk2 complexes"/>
</dbReference>
<dbReference type="Reactome" id="R-HSA-69202">
    <property type="pathway name" value="Cyclin E associated events during G1/S transition"/>
</dbReference>
<dbReference type="Reactome" id="R-HSA-69231">
    <property type="pathway name" value="Cyclin D associated events in G1"/>
</dbReference>
<dbReference type="Reactome" id="R-HSA-69563">
    <property type="pathway name" value="p53-Dependent G1 DNA Damage Response"/>
</dbReference>
<dbReference type="Reactome" id="R-HSA-9661069">
    <property type="pathway name" value="Defective binding of RB1 mutants to E2F1,(E2F2, E2F3)"/>
</dbReference>
<dbReference type="SignaLink" id="O96020"/>
<dbReference type="SIGNOR" id="O96020"/>
<dbReference type="BioGRID-ORCS" id="9134">
    <property type="hits" value="28 hits in 1165 CRISPR screens"/>
</dbReference>
<dbReference type="CD-CODE" id="8C2F96ED">
    <property type="entry name" value="Centrosome"/>
</dbReference>
<dbReference type="ChiTaRS" id="CCNE2">
    <property type="organism name" value="human"/>
</dbReference>
<dbReference type="GenomeRNAi" id="9134"/>
<dbReference type="Pharos" id="O96020">
    <property type="development level" value="Tbio"/>
</dbReference>
<dbReference type="PRO" id="PR:O96020"/>
<dbReference type="Proteomes" id="UP000005640">
    <property type="component" value="Chromosome 8"/>
</dbReference>
<dbReference type="RNAct" id="O96020">
    <property type="molecule type" value="protein"/>
</dbReference>
<dbReference type="Bgee" id="ENSG00000175305">
    <property type="expression patterns" value="Expressed in endometrium epithelium and 152 other cell types or tissues"/>
</dbReference>
<dbReference type="ExpressionAtlas" id="O96020">
    <property type="expression patterns" value="baseline and differential"/>
</dbReference>
<dbReference type="GO" id="GO:0097134">
    <property type="term" value="C:cyclin E1-CDK2 complex"/>
    <property type="evidence" value="ECO:0000318"/>
    <property type="project" value="GO_Central"/>
</dbReference>
<dbReference type="GO" id="GO:0097135">
    <property type="term" value="C:cyclin E2-CDK2 complex"/>
    <property type="evidence" value="ECO:0000353"/>
    <property type="project" value="ComplexPortal"/>
</dbReference>
<dbReference type="GO" id="GO:0005737">
    <property type="term" value="C:cytoplasm"/>
    <property type="evidence" value="ECO:0000318"/>
    <property type="project" value="GO_Central"/>
</dbReference>
<dbReference type="GO" id="GO:0005829">
    <property type="term" value="C:cytosol"/>
    <property type="evidence" value="ECO:0000304"/>
    <property type="project" value="Reactome"/>
</dbReference>
<dbReference type="GO" id="GO:0005815">
    <property type="term" value="C:microtubule organizing center"/>
    <property type="evidence" value="ECO:0000318"/>
    <property type="project" value="GO_Central"/>
</dbReference>
<dbReference type="GO" id="GO:0005654">
    <property type="term" value="C:nucleoplasm"/>
    <property type="evidence" value="ECO:0000304"/>
    <property type="project" value="Reactome"/>
</dbReference>
<dbReference type="GO" id="GO:0005634">
    <property type="term" value="C:nucleus"/>
    <property type="evidence" value="ECO:0000318"/>
    <property type="project" value="GO_Central"/>
</dbReference>
<dbReference type="GO" id="GO:0016538">
    <property type="term" value="F:cyclin-dependent protein serine/threonine kinase regulator activity"/>
    <property type="evidence" value="ECO:0000318"/>
    <property type="project" value="GO_Central"/>
</dbReference>
<dbReference type="GO" id="GO:0019901">
    <property type="term" value="F:protein kinase binding"/>
    <property type="evidence" value="ECO:0007669"/>
    <property type="project" value="Ensembl"/>
</dbReference>
<dbReference type="GO" id="GO:0051301">
    <property type="term" value="P:cell division"/>
    <property type="evidence" value="ECO:0007669"/>
    <property type="project" value="UniProtKB-KW"/>
</dbReference>
<dbReference type="GO" id="GO:0006270">
    <property type="term" value="P:DNA replication initiation"/>
    <property type="evidence" value="ECO:0007669"/>
    <property type="project" value="Ensembl"/>
</dbReference>
<dbReference type="GO" id="GO:0000082">
    <property type="term" value="P:G1/S transition of mitotic cell cycle"/>
    <property type="evidence" value="ECO:0000318"/>
    <property type="project" value="GO_Central"/>
</dbReference>
<dbReference type="GO" id="GO:0007129">
    <property type="term" value="P:homologous chromosome pairing at meiosis"/>
    <property type="evidence" value="ECO:0007669"/>
    <property type="project" value="Ensembl"/>
</dbReference>
<dbReference type="GO" id="GO:1900087">
    <property type="term" value="P:positive regulation of G1/S transition of mitotic cell cycle"/>
    <property type="evidence" value="ECO:0000318"/>
    <property type="project" value="GO_Central"/>
</dbReference>
<dbReference type="GO" id="GO:0000079">
    <property type="term" value="P:regulation of cyclin-dependent protein serine/threonine kinase activity"/>
    <property type="evidence" value="ECO:0000304"/>
    <property type="project" value="ProtInc"/>
</dbReference>
<dbReference type="GO" id="GO:0032880">
    <property type="term" value="P:regulation of protein localization"/>
    <property type="evidence" value="ECO:0007669"/>
    <property type="project" value="Ensembl"/>
</dbReference>
<dbReference type="GO" id="GO:0000723">
    <property type="term" value="P:telomere maintenance"/>
    <property type="evidence" value="ECO:0007669"/>
    <property type="project" value="Ensembl"/>
</dbReference>
<dbReference type="CDD" id="cd20580">
    <property type="entry name" value="CYCLIN_CCNE2_rpt1"/>
    <property type="match status" value="1"/>
</dbReference>
<dbReference type="CDD" id="cd20582">
    <property type="entry name" value="CYCLIN_CCNE2_rpt2"/>
    <property type="match status" value="1"/>
</dbReference>
<dbReference type="FunFam" id="1.10.472.10:FF:000024">
    <property type="entry name" value="G1/S-specific cyclin-E1"/>
    <property type="match status" value="1"/>
</dbReference>
<dbReference type="Gene3D" id="1.10.472.10">
    <property type="entry name" value="Cyclin-like"/>
    <property type="match status" value="2"/>
</dbReference>
<dbReference type="InterPro" id="IPR039361">
    <property type="entry name" value="Cyclin"/>
</dbReference>
<dbReference type="InterPro" id="IPR013763">
    <property type="entry name" value="Cyclin-like_dom"/>
</dbReference>
<dbReference type="InterPro" id="IPR036915">
    <property type="entry name" value="Cyclin-like_sf"/>
</dbReference>
<dbReference type="InterPro" id="IPR004367">
    <property type="entry name" value="Cyclin_C-dom"/>
</dbReference>
<dbReference type="InterPro" id="IPR006671">
    <property type="entry name" value="Cyclin_N"/>
</dbReference>
<dbReference type="InterPro" id="IPR048258">
    <property type="entry name" value="Cyclins_cyclin-box"/>
</dbReference>
<dbReference type="PANTHER" id="PTHR10177">
    <property type="entry name" value="CYCLINS"/>
    <property type="match status" value="1"/>
</dbReference>
<dbReference type="Pfam" id="PF02984">
    <property type="entry name" value="Cyclin_C"/>
    <property type="match status" value="1"/>
</dbReference>
<dbReference type="Pfam" id="PF00134">
    <property type="entry name" value="Cyclin_N"/>
    <property type="match status" value="1"/>
</dbReference>
<dbReference type="SMART" id="SM00385">
    <property type="entry name" value="CYCLIN"/>
    <property type="match status" value="1"/>
</dbReference>
<dbReference type="SMART" id="SM01332">
    <property type="entry name" value="Cyclin_C"/>
    <property type="match status" value="1"/>
</dbReference>
<dbReference type="SUPFAM" id="SSF47954">
    <property type="entry name" value="Cyclin-like"/>
    <property type="match status" value="2"/>
</dbReference>
<dbReference type="PROSITE" id="PS00292">
    <property type="entry name" value="CYCLINS"/>
    <property type="match status" value="1"/>
</dbReference>
<evidence type="ECO:0000256" key="1">
    <source>
        <dbReference type="SAM" id="MobiDB-lite"/>
    </source>
</evidence>
<evidence type="ECO:0000269" key="2">
    <source>
    </source>
</evidence>
<evidence type="ECO:0000269" key="3">
    <source>
    </source>
</evidence>
<evidence type="ECO:0000269" key="4">
    <source>
    </source>
</evidence>
<evidence type="ECO:0000269" key="5">
    <source>
    </source>
</evidence>
<evidence type="ECO:0000269" key="6">
    <source ref="4"/>
</evidence>
<evidence type="ECO:0000303" key="7">
    <source>
    </source>
</evidence>
<evidence type="ECO:0000305" key="8"/>
<evidence type="ECO:0007744" key="9">
    <source>
        <dbReference type="PDB" id="8HN9"/>
    </source>
</evidence>
<evidence type="ECO:0007744" key="10">
    <source>
    </source>
</evidence>
<evidence type="ECO:0007744" key="11">
    <source>
    </source>
</evidence>
<evidence type="ECO:0007744" key="12">
    <source>
    </source>
</evidence>
<evidence type="ECO:0007744" key="13">
    <source>
    </source>
</evidence>
<gene>
    <name type="primary">CCNE2</name>
</gene>
<proteinExistence type="evidence at protein level"/>
<keyword id="KW-0002">3D-structure</keyword>
<keyword id="KW-0025">Alternative splicing</keyword>
<keyword id="KW-0131">Cell cycle</keyword>
<keyword id="KW-0132">Cell division</keyword>
<keyword id="KW-0195">Cyclin</keyword>
<keyword id="KW-0539">Nucleus</keyword>
<keyword id="KW-0597">Phosphoprotein</keyword>
<keyword id="KW-1267">Proteomics identification</keyword>
<keyword id="KW-1185">Reference proteome</keyword>
<feature type="chain" id="PRO_0000080461" description="G1/S-specific cyclin-E2">
    <location>
        <begin position="1"/>
        <end position="404"/>
    </location>
</feature>
<feature type="region of interest" description="Disordered" evidence="1">
    <location>
        <begin position="1"/>
        <end position="44"/>
    </location>
</feature>
<feature type="compositionally biased region" description="Low complexity" evidence="1">
    <location>
        <begin position="12"/>
        <end position="26"/>
    </location>
</feature>
<feature type="compositionally biased region" description="Basic and acidic residues" evidence="1">
    <location>
        <begin position="35"/>
        <end position="44"/>
    </location>
</feature>
<feature type="modified residue" description="Phosphoserine" evidence="10 12 13">
    <location>
        <position position="21"/>
    </location>
</feature>
<feature type="modified residue" description="N6-lactoyllysine" evidence="2">
    <location>
        <position position="348"/>
    </location>
</feature>
<feature type="modified residue" description="Phosphoserine" evidence="11">
    <location>
        <position position="383"/>
    </location>
</feature>
<feature type="modified residue" description="Phosphothreonine" evidence="11">
    <location>
        <position position="392"/>
    </location>
</feature>
<feature type="splice variant" id="VSP_001256" description="In isoform Short." evidence="7">
    <location>
        <begin position="167"/>
        <end position="211"/>
    </location>
</feature>
<feature type="sequence variant" id="VAR_021347" description="In dbSNP:rs28399585." evidence="6">
    <original>N</original>
    <variation>S</variation>
    <location>
        <position position="387"/>
    </location>
</feature>
<feature type="mutagenesis site" description="Increase of steady state level." evidence="4">
    <original>T</original>
    <variation>A</variation>
    <location>
        <position position="392"/>
    </location>
</feature>